<keyword id="KW-1185">Reference proteome</keyword>
<keyword id="KW-0687">Ribonucleoprotein</keyword>
<keyword id="KW-0689">Ribosomal protein</keyword>
<reference key="1">
    <citation type="journal article" date="2006" name="PLoS Biol.">
        <title>Metabolic complementarity and genomics of the dual bacterial symbiosis of sharpshooters.</title>
        <authorList>
            <person name="Wu D."/>
            <person name="Daugherty S.C."/>
            <person name="Van Aken S.E."/>
            <person name="Pai G.H."/>
            <person name="Watkins K.L."/>
            <person name="Khouri H."/>
            <person name="Tallon L.J."/>
            <person name="Zaborsky J.M."/>
            <person name="Dunbar H.E."/>
            <person name="Tran P.L."/>
            <person name="Moran N.A."/>
            <person name="Eisen J.A."/>
        </authorList>
    </citation>
    <scope>NUCLEOTIDE SEQUENCE [LARGE SCALE GENOMIC DNA]</scope>
</reference>
<accession>Q1LTD0</accession>
<comment type="similarity">
    <text evidence="1">Belongs to the universal ribosomal protein uL29 family.</text>
</comment>
<gene>
    <name evidence="1" type="primary">rpmC</name>
    <name type="ordered locus">BCI_0336</name>
</gene>
<protein>
    <recommendedName>
        <fullName evidence="1">Large ribosomal subunit protein uL29</fullName>
    </recommendedName>
    <alternativeName>
        <fullName evidence="2">50S ribosomal protein L29</fullName>
    </alternativeName>
</protein>
<feature type="chain" id="PRO_1000007419" description="Large ribosomal subunit protein uL29">
    <location>
        <begin position="1"/>
        <end position="63"/>
    </location>
</feature>
<proteinExistence type="inferred from homology"/>
<name>RL29_BAUCH</name>
<organism>
    <name type="scientific">Baumannia cicadellinicola subsp. Homalodisca coagulata</name>
    <dbReference type="NCBI Taxonomy" id="374463"/>
    <lineage>
        <taxon>Bacteria</taxon>
        <taxon>Pseudomonadati</taxon>
        <taxon>Pseudomonadota</taxon>
        <taxon>Gammaproteobacteria</taxon>
        <taxon>Candidatus Palibaumannia</taxon>
    </lineage>
</organism>
<evidence type="ECO:0000255" key="1">
    <source>
        <dbReference type="HAMAP-Rule" id="MF_00374"/>
    </source>
</evidence>
<evidence type="ECO:0000305" key="2"/>
<dbReference type="EMBL" id="CP000238">
    <property type="protein sequence ID" value="ABF14327.1"/>
    <property type="molecule type" value="Genomic_DNA"/>
</dbReference>
<dbReference type="RefSeq" id="WP_011520517.1">
    <property type="nucleotide sequence ID" value="NC_007984.1"/>
</dbReference>
<dbReference type="SMR" id="Q1LTD0"/>
<dbReference type="STRING" id="374463.BCI_0336"/>
<dbReference type="KEGG" id="bci:BCI_0336"/>
<dbReference type="HOGENOM" id="CLU_158491_1_2_6"/>
<dbReference type="OrthoDB" id="9815192at2"/>
<dbReference type="Proteomes" id="UP000002427">
    <property type="component" value="Chromosome"/>
</dbReference>
<dbReference type="GO" id="GO:0022625">
    <property type="term" value="C:cytosolic large ribosomal subunit"/>
    <property type="evidence" value="ECO:0007669"/>
    <property type="project" value="TreeGrafter"/>
</dbReference>
<dbReference type="GO" id="GO:0003735">
    <property type="term" value="F:structural constituent of ribosome"/>
    <property type="evidence" value="ECO:0007669"/>
    <property type="project" value="InterPro"/>
</dbReference>
<dbReference type="GO" id="GO:0006412">
    <property type="term" value="P:translation"/>
    <property type="evidence" value="ECO:0007669"/>
    <property type="project" value="UniProtKB-UniRule"/>
</dbReference>
<dbReference type="CDD" id="cd00427">
    <property type="entry name" value="Ribosomal_L29_HIP"/>
    <property type="match status" value="1"/>
</dbReference>
<dbReference type="FunFam" id="1.10.287.310:FF:000001">
    <property type="entry name" value="50S ribosomal protein L29"/>
    <property type="match status" value="1"/>
</dbReference>
<dbReference type="Gene3D" id="6.10.140.1970">
    <property type="match status" value="1"/>
</dbReference>
<dbReference type="HAMAP" id="MF_00374">
    <property type="entry name" value="Ribosomal_uL29"/>
    <property type="match status" value="1"/>
</dbReference>
<dbReference type="InterPro" id="IPR050063">
    <property type="entry name" value="Ribosomal_protein_uL29"/>
</dbReference>
<dbReference type="InterPro" id="IPR001854">
    <property type="entry name" value="Ribosomal_uL29"/>
</dbReference>
<dbReference type="InterPro" id="IPR036049">
    <property type="entry name" value="Ribosomal_uL29_sf"/>
</dbReference>
<dbReference type="NCBIfam" id="TIGR00012">
    <property type="entry name" value="L29"/>
    <property type="match status" value="1"/>
</dbReference>
<dbReference type="PANTHER" id="PTHR10916">
    <property type="entry name" value="60S RIBOSOMAL PROTEIN L35/50S RIBOSOMAL PROTEIN L29"/>
    <property type="match status" value="1"/>
</dbReference>
<dbReference type="PANTHER" id="PTHR10916:SF0">
    <property type="entry name" value="LARGE RIBOSOMAL SUBUNIT PROTEIN UL29C"/>
    <property type="match status" value="1"/>
</dbReference>
<dbReference type="Pfam" id="PF00831">
    <property type="entry name" value="Ribosomal_L29"/>
    <property type="match status" value="1"/>
</dbReference>
<dbReference type="SUPFAM" id="SSF46561">
    <property type="entry name" value="Ribosomal protein L29 (L29p)"/>
    <property type="match status" value="1"/>
</dbReference>
<sequence length="63" mass="7359">MIKQELRDKDTKELHIELLGLFREQFNLRMQAASGQLQQTHLLKKVRNKIARVKTLLTDNTGV</sequence>